<protein>
    <recommendedName>
        <fullName>Zinc finger CCCH domain-containing protein 14</fullName>
    </recommendedName>
</protein>
<reference key="1">
    <citation type="journal article" date="2002" name="BMC Genomics">
        <title>Cynomolgus monkey testicular cDNAs for discovery of novel human genes in the human genome sequence.</title>
        <authorList>
            <person name="Osada N."/>
            <person name="Hida M."/>
            <person name="Kusuda J."/>
            <person name="Tanuma R."/>
            <person name="Hirata M."/>
            <person name="Suto Y."/>
            <person name="Hirai M."/>
            <person name="Terao K."/>
            <person name="Sugano S."/>
            <person name="Hashimoto K."/>
        </authorList>
    </citation>
    <scope>NUCLEOTIDE SEQUENCE [LARGE SCALE MRNA] (ISOFORM 4)</scope>
    <source>
        <tissue>Testis</tissue>
    </source>
</reference>
<reference key="2">
    <citation type="submission" date="2005-06" db="EMBL/GenBank/DDBJ databases">
        <title>DNA sequences of macaque genes expressed in brain or testis and its evolutionary implications.</title>
        <authorList>
            <consortium name="International consortium for macaque cDNA sequencing and analysis"/>
        </authorList>
    </citation>
    <scope>NUCLEOTIDE SEQUENCE [LARGE SCALE MRNA] (ISOFORMS 2; 3 AND 4)</scope>
    <source>
        <tissue>Testis</tissue>
    </source>
</reference>
<proteinExistence type="evidence at transcript level"/>
<sequence>MEIGTEISRKIRSAIKGKLQELGAYVDEELPDYIMVMVANKKSQDQMTEDLSLFLGNNTIRFTVWLHGVLDKLRSVTTEPSSLKSSDTNIFDSNVPSNKSNFSRGDERRHEAAVPPLAIPSTRPEKRDSRVSTSSQESKTTNVRQTYDDGAATRLMSTVKPLREPAPSEDVIDIKPEPDDLIDEDLNFVQENPLSQKKPTVTLTYGSSRPSIEIYRPPASRNADSGVHLNRLQFQQQQNSIHAAKQLDMQNSWVYETGRLCEPEVLNSLEETYSPFFRNNSEKMSMEDENFRKRKLPVVSSVVKVKKFNHDGEEEEEDDDYGSRTGSISSSVSVPAKPERRPSLPPSKQANKNLILKAISEAQESVTKTTNYSTVPQKQTLPVAPRTRTSQEELLAEVVQGQSRTPRISPPIKEEETKGDSVEKNQGTQQRQLLSRLQIDPVMAETLQMSQDYYDMESMVHADTRSFILKKPKLSEEIVVAPNQESGMKTADSLRVLSGHLMQTRDLVQPDKPASPKFIVTLDGVPSPPGYMSDQEEDMCFEGMKPVNQTAASNKGLRGLLHPQQLHLLSRQLEDPNGSFSNAEMSELSVAQKPEKLLERCKYWPACKNGDECAYHHPISPCKAFPNCKFAEKCLFVHPNCKYDAKCTKPDCPFTHVSRRIPVLSPKPAVAPPAPPSSSQLCRYFPACKKMECPFYHPKHCRFNTQCTRPDCTFYHPTINVPPRHALKWIRPQTSE</sequence>
<organism>
    <name type="scientific">Macaca fascicularis</name>
    <name type="common">Crab-eating macaque</name>
    <name type="synonym">Cynomolgus monkey</name>
    <dbReference type="NCBI Taxonomy" id="9541"/>
    <lineage>
        <taxon>Eukaryota</taxon>
        <taxon>Metazoa</taxon>
        <taxon>Chordata</taxon>
        <taxon>Craniata</taxon>
        <taxon>Vertebrata</taxon>
        <taxon>Euteleostomi</taxon>
        <taxon>Mammalia</taxon>
        <taxon>Eutheria</taxon>
        <taxon>Euarchontoglires</taxon>
        <taxon>Primates</taxon>
        <taxon>Haplorrhini</taxon>
        <taxon>Catarrhini</taxon>
        <taxon>Cercopithecidae</taxon>
        <taxon>Cercopithecinae</taxon>
        <taxon>Macaca</taxon>
    </lineage>
</organism>
<name>ZC3HE_MACFA</name>
<evidence type="ECO:0000250" key="1">
    <source>
        <dbReference type="UniProtKB" id="Q6PJT7"/>
    </source>
</evidence>
<evidence type="ECO:0000250" key="2">
    <source>
        <dbReference type="UniProtKB" id="Q7TMD5"/>
    </source>
</evidence>
<evidence type="ECO:0000250" key="3">
    <source>
        <dbReference type="UniProtKB" id="Q8BJ05"/>
    </source>
</evidence>
<evidence type="ECO:0000255" key="4">
    <source>
        <dbReference type="PROSITE-ProRule" id="PRU00723"/>
    </source>
</evidence>
<evidence type="ECO:0000256" key="5">
    <source>
        <dbReference type="SAM" id="MobiDB-lite"/>
    </source>
</evidence>
<evidence type="ECO:0000303" key="6">
    <source>
    </source>
</evidence>
<evidence type="ECO:0000303" key="7">
    <source ref="2"/>
</evidence>
<evidence type="ECO:0000305" key="8"/>
<feature type="chain" id="PRO_0000331312" description="Zinc finger CCCH domain-containing protein 14">
    <location>
        <begin position="1"/>
        <end position="736"/>
    </location>
</feature>
<feature type="zinc finger region" description="C3H1-type 1" evidence="4">
    <location>
        <begin position="595"/>
        <end position="620"/>
    </location>
</feature>
<feature type="zinc finger region" description="C3H1-type 2" evidence="4">
    <location>
        <begin position="621"/>
        <end position="640"/>
    </location>
</feature>
<feature type="zinc finger region" description="C3H1-type 3" evidence="4">
    <location>
        <begin position="641"/>
        <end position="656"/>
    </location>
</feature>
<feature type="zinc finger region" description="C3H1-type 4" evidence="4">
    <location>
        <begin position="682"/>
        <end position="699"/>
    </location>
</feature>
<feature type="zinc finger region" description="C3H1-type 5" evidence="4">
    <location>
        <begin position="701"/>
        <end position="719"/>
    </location>
</feature>
<feature type="region of interest" description="Disordered" evidence="5">
    <location>
        <begin position="78"/>
        <end position="146"/>
    </location>
</feature>
<feature type="region of interest" description="Disordered" evidence="5">
    <location>
        <begin position="310"/>
        <end position="350"/>
    </location>
</feature>
<feature type="region of interest" description="Disordered" evidence="5">
    <location>
        <begin position="398"/>
        <end position="430"/>
    </location>
</feature>
<feature type="compositionally biased region" description="Polar residues" evidence="5">
    <location>
        <begin position="78"/>
        <end position="103"/>
    </location>
</feature>
<feature type="compositionally biased region" description="Polar residues" evidence="5">
    <location>
        <begin position="131"/>
        <end position="145"/>
    </location>
</feature>
<feature type="compositionally biased region" description="Basic and acidic residues" evidence="5">
    <location>
        <begin position="412"/>
        <end position="423"/>
    </location>
</feature>
<feature type="modified residue" description="N-acetylmethionine" evidence="1">
    <location>
        <position position="1"/>
    </location>
</feature>
<feature type="modified residue" description="Phosphoserine" evidence="3">
    <location>
        <position position="85"/>
    </location>
</feature>
<feature type="modified residue" description="Phosphoserine" evidence="1">
    <location>
        <position position="240"/>
    </location>
</feature>
<feature type="modified residue" description="Phosphoserine" evidence="1">
    <location>
        <position position="281"/>
    </location>
</feature>
<feature type="modified residue" description="Phosphoserine" evidence="1">
    <location>
        <position position="327"/>
    </location>
</feature>
<feature type="modified residue" description="Phosphoserine" evidence="1">
    <location>
        <position position="343"/>
    </location>
</feature>
<feature type="modified residue" description="N6-acetyllysine; alternate" evidence="1">
    <location>
        <position position="357"/>
    </location>
</feature>
<feature type="modified residue" description="Phosphoserine" evidence="1">
    <location>
        <position position="390"/>
    </location>
</feature>
<feature type="modified residue" description="Phosphoserine" evidence="1">
    <location>
        <position position="409"/>
    </location>
</feature>
<feature type="modified residue" description="Phosphoserine" evidence="1">
    <location>
        <position position="421"/>
    </location>
</feature>
<feature type="modified residue" description="Phosphoserine" evidence="1">
    <location>
        <position position="498"/>
    </location>
</feature>
<feature type="modified residue" description="Phosphoserine" evidence="1">
    <location>
        <position position="515"/>
    </location>
</feature>
<feature type="modified residue" description="Phosphoserine" evidence="3">
    <location>
        <position position="527"/>
    </location>
</feature>
<feature type="modified residue" description="Phosphoserine" evidence="1">
    <location>
        <position position="620"/>
    </location>
</feature>
<feature type="cross-link" description="Glycyl lysine isopeptide (Lys-Gly) (interchain with G-Cter in SUMO2)" evidence="1">
    <location>
        <position position="99"/>
    </location>
</feature>
<feature type="cross-link" description="Glycyl lysine isopeptide (Lys-Gly) (interchain with G-Cter in SUMO2)" evidence="1">
    <location>
        <position position="139"/>
    </location>
</feature>
<feature type="cross-link" description="Glycyl lysine isopeptide (Lys-Gly) (interchain with G-Cter in SUMO2)" evidence="1">
    <location>
        <position position="175"/>
    </location>
</feature>
<feature type="cross-link" description="Glycyl lysine isopeptide (Lys-Gly) (interchain with G-Cter in SUMO2)" evidence="1">
    <location>
        <position position="198"/>
    </location>
</feature>
<feature type="cross-link" description="Glycyl lysine isopeptide (Lys-Gly) (interchain with G-Cter in SUMO2)" evidence="1">
    <location>
        <position position="245"/>
    </location>
</feature>
<feature type="cross-link" description="Glycyl lysine isopeptide (Lys-Gly) (interchain with G-Cter in SUMO2)" evidence="1">
    <location>
        <position position="283"/>
    </location>
</feature>
<feature type="cross-link" description="Glycyl lysine isopeptide (Lys-Gly) (interchain with G-Cter in SUMO2)" evidence="1">
    <location>
        <position position="295"/>
    </location>
</feature>
<feature type="cross-link" description="Glycyl lysine isopeptide (Lys-Gly) (interchain with G-Cter in SUMO2); alternate" evidence="1">
    <location>
        <position position="357"/>
    </location>
</feature>
<feature type="cross-link" description="Glycyl lysine isopeptide (Lys-Gly) (interchain with G-Cter in SUMO2)" evidence="1">
    <location>
        <position position="378"/>
    </location>
</feature>
<feature type="cross-link" description="Glycyl lysine isopeptide (Lys-Gly) (interchain with G-Cter in SUMO2)" evidence="1">
    <location>
        <position position="413"/>
    </location>
</feature>
<feature type="cross-link" description="Glycyl lysine isopeptide (Lys-Gly) (interchain with G-Cter in SUMO2)" evidence="1">
    <location>
        <position position="489"/>
    </location>
</feature>
<feature type="splice variant" id="VSP_033172" description="In isoform 4." evidence="6 7">
    <location>
        <begin position="1"/>
        <end position="298"/>
    </location>
</feature>
<feature type="splice variant" id="VSP_033173" description="In isoform 3." evidence="7">
    <location>
        <begin position="1"/>
        <end position="155"/>
    </location>
</feature>
<feature type="splice variant" id="VSP_033174" description="In isoform 4." evidence="6 7">
    <original>VSSVVKVKKFNHDGEEEEEDDDYGSRTGSISSSVSVPAKPERRPSLPPSKQANKNLILKAISEAQESVTKTTNYSTVPQKQTLPVAPRTRTSQEELLAEVVQGQSRTPRISPPIKEEETKGDSVEKNQ</original>
    <variation>MKMSSKFPSPPLPIFLPPEPVDLGSITSSSCSLNELDNISHLLRKISTDINEIKGMKAAILTVEANLFDLNVRVSQNEAKISSLEVKMNEYSTTSECNRQFEDQEEDTESQSRTTDVKIIGFLRNVEK</variation>
    <location>
        <begin position="299"/>
        <end position="426"/>
    </location>
</feature>
<feature type="splice variant" id="VSP_033175" description="In isoform 2 and isoform 3." evidence="7">
    <location>
        <begin position="452"/>
        <end position="582"/>
    </location>
</feature>
<feature type="splice variant" id="VSP_033176" description="In isoform 3." evidence="7">
    <location>
        <position position="669"/>
    </location>
</feature>
<comment type="function">
    <text evidence="1">RNA-binding protein involved in the biogenesis of circular RNAs (circRNAs), which are produced by back-splicing circularization of pre-mRNAs. Acts by binding to both exon-intron boundary and 3'-UTR of pre-mRNAs to promote circRNA biogenesis through dimerization and the association with the spliceosome. Required for spermatogenesis via involvement in circRNA biogenesis. Regulates the pre-mRNA processing of ATP5MC1; preventing its degradation. Also binds the poly(A) tail of mRNAs; controlling poly(A) length in neuronal cells.</text>
</comment>
<comment type="subunit">
    <text evidence="1">Homodimer; facilitating circular RNAs (circRNAs) formation. Associates with the spliceosome. Interacts with HOOK2. Interacts with ZFC3H1 in a RNase-sensitive manner.</text>
</comment>
<comment type="subcellular location">
    <subcellularLocation>
        <location evidence="1">Nucleus speckle</location>
    </subcellularLocation>
    <text evidence="2">Colocalizes with poly(A) RNA in nuclear speckles.</text>
</comment>
<comment type="alternative products">
    <event type="alternative splicing"/>
    <isoform>
        <id>Q4R6F6-1</id>
        <name>1</name>
        <sequence type="displayed"/>
    </isoform>
    <isoform>
        <id>Q4R6F6-2</id>
        <name>2</name>
        <sequence type="described" ref="VSP_033175"/>
    </isoform>
    <isoform>
        <id>Q4R6F6-3</id>
        <name>3</name>
        <sequence type="described" ref="VSP_033173 VSP_033175 VSP_033176"/>
    </isoform>
    <isoform>
        <id>Q4R6F6-4</id>
        <name>4</name>
        <sequence type="described" ref="VSP_033172 VSP_033174"/>
    </isoform>
</comment>
<comment type="similarity">
    <text evidence="8">Belongs to the ZC3H14 family.</text>
</comment>
<keyword id="KW-0007">Acetylation</keyword>
<keyword id="KW-0025">Alternative splicing</keyword>
<keyword id="KW-0221">Differentiation</keyword>
<keyword id="KW-1017">Isopeptide bond</keyword>
<keyword id="KW-0479">Metal-binding</keyword>
<keyword id="KW-0539">Nucleus</keyword>
<keyword id="KW-0597">Phosphoprotein</keyword>
<keyword id="KW-1185">Reference proteome</keyword>
<keyword id="KW-0677">Repeat</keyword>
<keyword id="KW-0694">RNA-binding</keyword>
<keyword id="KW-0744">Spermatogenesis</keyword>
<keyword id="KW-0832">Ubl conjugation</keyword>
<keyword id="KW-0862">Zinc</keyword>
<keyword id="KW-0863">Zinc-finger</keyword>
<gene>
    <name type="primary">ZC3H14</name>
    <name type="ORF">QtsA-17814</name>
    <name type="ORF">QtsA-18125</name>
    <name type="ORF">QtsA-19123</name>
</gene>
<accession>Q4R6F6</accession>
<accession>Q4R6K3</accession>
<accession>Q95LZ4</accession>
<dbReference type="EMBL" id="AB071047">
    <property type="protein sequence ID" value="BAB64440.1"/>
    <property type="molecule type" value="mRNA"/>
</dbReference>
<dbReference type="EMBL" id="AB169180">
    <property type="protein sequence ID" value="BAE01272.1"/>
    <property type="molecule type" value="mRNA"/>
</dbReference>
<dbReference type="EMBL" id="AB169227">
    <property type="protein sequence ID" value="BAE01319.1"/>
    <property type="molecule type" value="mRNA"/>
</dbReference>
<dbReference type="EMBL" id="AB169336">
    <property type="protein sequence ID" value="BAE01421.1"/>
    <property type="molecule type" value="mRNA"/>
</dbReference>
<dbReference type="RefSeq" id="XP_005562047.1">
    <molecule id="Q4R6F6-1"/>
    <property type="nucleotide sequence ID" value="XM_005561990.4"/>
</dbReference>
<dbReference type="RefSeq" id="XP_005562052.1">
    <molecule id="Q4R6F6-2"/>
    <property type="nucleotide sequence ID" value="XM_005561995.4"/>
</dbReference>
<dbReference type="STRING" id="9541.ENSMFAP00000018893"/>
<dbReference type="GeneID" id="101865337"/>
<dbReference type="KEGG" id="mcf:101865337"/>
<dbReference type="CTD" id="79882"/>
<dbReference type="VEuPathDB" id="HostDB:ENSMFAG00000032254"/>
<dbReference type="eggNOG" id="KOG3702">
    <property type="taxonomic scope" value="Eukaryota"/>
</dbReference>
<dbReference type="OMA" id="CPYTHVS"/>
<dbReference type="OrthoDB" id="6273at314294"/>
<dbReference type="Proteomes" id="UP000233100">
    <property type="component" value="Chromosome 7"/>
</dbReference>
<dbReference type="GO" id="GO:0005737">
    <property type="term" value="C:cytoplasm"/>
    <property type="evidence" value="ECO:0007669"/>
    <property type="project" value="TreeGrafter"/>
</dbReference>
<dbReference type="GO" id="GO:0016607">
    <property type="term" value="C:nuclear speck"/>
    <property type="evidence" value="ECO:0000250"/>
    <property type="project" value="UniProtKB"/>
</dbReference>
<dbReference type="GO" id="GO:0005634">
    <property type="term" value="C:nucleus"/>
    <property type="evidence" value="ECO:0000250"/>
    <property type="project" value="UniProtKB"/>
</dbReference>
<dbReference type="GO" id="GO:0008143">
    <property type="term" value="F:poly(A) binding"/>
    <property type="evidence" value="ECO:0000250"/>
    <property type="project" value="UniProtKB"/>
</dbReference>
<dbReference type="GO" id="GO:0036002">
    <property type="term" value="F:pre-mRNA binding"/>
    <property type="evidence" value="ECO:0000250"/>
    <property type="project" value="UniProtKB"/>
</dbReference>
<dbReference type="GO" id="GO:0008270">
    <property type="term" value="F:zinc ion binding"/>
    <property type="evidence" value="ECO:0007669"/>
    <property type="project" value="UniProtKB-KW"/>
</dbReference>
<dbReference type="GO" id="GO:0048255">
    <property type="term" value="P:mRNA stabilization"/>
    <property type="evidence" value="ECO:0000250"/>
    <property type="project" value="UniProtKB"/>
</dbReference>
<dbReference type="GO" id="GO:0007283">
    <property type="term" value="P:spermatogenesis"/>
    <property type="evidence" value="ECO:0000250"/>
    <property type="project" value="UniProtKB"/>
</dbReference>
<dbReference type="FunFam" id="4.10.1000.30:FF:000001">
    <property type="entry name" value="Zinc finger CCCH domain-containing protein 14"/>
    <property type="match status" value="1"/>
</dbReference>
<dbReference type="FunFam" id="4.10.1000.40:FF:000006">
    <property type="entry name" value="Zinc finger CCCH domain-containing protein 14"/>
    <property type="match status" value="1"/>
</dbReference>
<dbReference type="FunFam" id="1.20.1390.10:FF:000006">
    <property type="entry name" value="zinc finger CCCH domain-containing protein 14"/>
    <property type="match status" value="1"/>
</dbReference>
<dbReference type="FunFam" id="4.10.1000.40:FF:000001">
    <property type="entry name" value="zinc finger CCCH domain-containing protein 14 isoform X2"/>
    <property type="match status" value="1"/>
</dbReference>
<dbReference type="FunFam" id="4.10.1000.30:FF:000003">
    <property type="entry name" value="zinc finger CCCH domain-containing protein 14 isoform X6"/>
    <property type="match status" value="1"/>
</dbReference>
<dbReference type="Gene3D" id="4.10.1000.30">
    <property type="match status" value="1"/>
</dbReference>
<dbReference type="Gene3D" id="4.10.1000.40">
    <property type="match status" value="1"/>
</dbReference>
<dbReference type="Gene3D" id="1.20.1390.10">
    <property type="entry name" value="PWI domain"/>
    <property type="match status" value="1"/>
</dbReference>
<dbReference type="InterPro" id="IPR040366">
    <property type="entry name" value="Nab2/ZC3H14"/>
</dbReference>
<dbReference type="InterPro" id="IPR000571">
    <property type="entry name" value="Znf_CCCH"/>
</dbReference>
<dbReference type="PANTHER" id="PTHR14738">
    <property type="entry name" value="ZINC FINGER CCCH DOMAIN-CONTAINING PROTEIN 14"/>
    <property type="match status" value="1"/>
</dbReference>
<dbReference type="PANTHER" id="PTHR14738:SF29">
    <property type="entry name" value="ZINC FINGER CCCH DOMAIN-CONTAINING PROTEIN 14"/>
    <property type="match status" value="1"/>
</dbReference>
<dbReference type="Pfam" id="PF14608">
    <property type="entry name" value="zf-CCCH_2"/>
    <property type="match status" value="5"/>
</dbReference>
<dbReference type="SMART" id="SM00356">
    <property type="entry name" value="ZnF_C3H1"/>
    <property type="match status" value="3"/>
</dbReference>
<dbReference type="PROSITE" id="PS50103">
    <property type="entry name" value="ZF_C3H1"/>
    <property type="match status" value="3"/>
</dbReference>